<accession>P64786</accession>
<accession>A0A1R3XXT5</accession>
<accession>Q11059</accession>
<accession>X2BHG5</accession>
<protein>
    <recommendedName>
        <fullName evidence="1">Type-5 uracil-DNA glycosylase</fullName>
        <ecNumber evidence="1">3.2.2.-</ecNumber>
    </recommendedName>
</protein>
<organism>
    <name type="scientific">Mycobacterium bovis (strain ATCC BAA-935 / AF2122/97)</name>
    <dbReference type="NCBI Taxonomy" id="233413"/>
    <lineage>
        <taxon>Bacteria</taxon>
        <taxon>Bacillati</taxon>
        <taxon>Actinomycetota</taxon>
        <taxon>Actinomycetes</taxon>
        <taxon>Mycobacteriales</taxon>
        <taxon>Mycobacteriaceae</taxon>
        <taxon>Mycobacterium</taxon>
        <taxon>Mycobacterium tuberculosis complex</taxon>
    </lineage>
</organism>
<name>UDGB_MYCBO</name>
<reference key="1">
    <citation type="journal article" date="2003" name="Proc. Natl. Acad. Sci. U.S.A.">
        <title>The complete genome sequence of Mycobacterium bovis.</title>
        <authorList>
            <person name="Garnier T."/>
            <person name="Eiglmeier K."/>
            <person name="Camus J.-C."/>
            <person name="Medina N."/>
            <person name="Mansoor H."/>
            <person name="Pryor M."/>
            <person name="Duthoy S."/>
            <person name="Grondin S."/>
            <person name="Lacroix C."/>
            <person name="Monsempe C."/>
            <person name="Simon S."/>
            <person name="Harris B."/>
            <person name="Atkin R."/>
            <person name="Doggett J."/>
            <person name="Mayes R."/>
            <person name="Keating L."/>
            <person name="Wheeler P.R."/>
            <person name="Parkhill J."/>
            <person name="Barrell B.G."/>
            <person name="Cole S.T."/>
            <person name="Gordon S.V."/>
            <person name="Hewinson R.G."/>
        </authorList>
    </citation>
    <scope>NUCLEOTIDE SEQUENCE [LARGE SCALE GENOMIC DNA]</scope>
    <source>
        <strain>ATCC BAA-935 / AF2122/97</strain>
    </source>
</reference>
<reference key="2">
    <citation type="journal article" date="2017" name="Genome Announc.">
        <title>Updated reference genome sequence and annotation of Mycobacterium bovis AF2122/97.</title>
        <authorList>
            <person name="Malone K.M."/>
            <person name="Farrell D."/>
            <person name="Stuber T.P."/>
            <person name="Schubert O.T."/>
            <person name="Aebersold R."/>
            <person name="Robbe-Austerman S."/>
            <person name="Gordon S.V."/>
        </authorList>
    </citation>
    <scope>NUCLEOTIDE SEQUENCE [LARGE SCALE GENOMIC DNA]</scope>
    <scope>GENOME REANNOTATION</scope>
    <source>
        <strain>ATCC BAA-935 / AF2122/97</strain>
    </source>
</reference>
<evidence type="ECO:0000250" key="1">
    <source>
        <dbReference type="UniProtKB" id="P9WM53"/>
    </source>
</evidence>
<evidence type="ECO:0000250" key="2">
    <source>
        <dbReference type="UniProtKB" id="Q5SJ65"/>
    </source>
</evidence>
<evidence type="ECO:0000256" key="3">
    <source>
        <dbReference type="SAM" id="MobiDB-lite"/>
    </source>
</evidence>
<evidence type="ECO:0000305" key="4"/>
<proteinExistence type="inferred from homology"/>
<sequence length="268" mass="28500">MHPKTGRAFRSPVEPGSGWPGDPATPQTPVAADAAQVSALAGGAGSICELNALISVCRACPRLVSWREEVAVVKRRAFADQPYWGRPVPGWGSKRPRLLILGLAPAAHGANRTGRMFTGDRSGDQLYAALHRAGLVNSPVSVDAADGLRANRIRITAPVRCAPPGNSPTPAERLTCSPWLNAEWRLVSDHIRAIVALGGFAWQVALRLAGASGTPKPRFGHGVVTELGAGVRLLGCYHPSQQNMFTGRLTPTMLDDIFREAKKLAGIE</sequence>
<dbReference type="EC" id="3.2.2.-" evidence="1"/>
<dbReference type="EMBL" id="LT708304">
    <property type="protein sequence ID" value="SIT99890.1"/>
    <property type="status" value="ALT_INIT"/>
    <property type="molecule type" value="Genomic_DNA"/>
</dbReference>
<dbReference type="RefSeq" id="NP_854943.1">
    <property type="nucleotide sequence ID" value="NC_002945.3"/>
</dbReference>
<dbReference type="SMR" id="P64786"/>
<dbReference type="KEGG" id="mbo:BQ2027_MB1289"/>
<dbReference type="PATRIC" id="fig|233413.5.peg.1414"/>
<dbReference type="Proteomes" id="UP000001419">
    <property type="component" value="Chromosome"/>
</dbReference>
<dbReference type="GO" id="GO:0051539">
    <property type="term" value="F:4 iron, 4 sulfur cluster binding"/>
    <property type="evidence" value="ECO:0007669"/>
    <property type="project" value="UniProtKB-KW"/>
</dbReference>
<dbReference type="GO" id="GO:0033958">
    <property type="term" value="F:DNA-deoxyinosine glycosylase activity"/>
    <property type="evidence" value="ECO:0007669"/>
    <property type="project" value="InterPro"/>
</dbReference>
<dbReference type="GO" id="GO:0046872">
    <property type="term" value="F:metal ion binding"/>
    <property type="evidence" value="ECO:0007669"/>
    <property type="project" value="UniProtKB-KW"/>
</dbReference>
<dbReference type="GO" id="GO:0004844">
    <property type="term" value="F:uracil DNA N-glycosylase activity"/>
    <property type="evidence" value="ECO:0007669"/>
    <property type="project" value="InterPro"/>
</dbReference>
<dbReference type="GO" id="GO:0006284">
    <property type="term" value="P:base-excision repair"/>
    <property type="evidence" value="ECO:0007669"/>
    <property type="project" value="InterPro"/>
</dbReference>
<dbReference type="CDD" id="cd10031">
    <property type="entry name" value="UDG-F5_TTUDGB_like"/>
    <property type="match status" value="1"/>
</dbReference>
<dbReference type="Gene3D" id="3.40.470.10">
    <property type="entry name" value="Uracil-DNA glycosylase-like domain"/>
    <property type="match status" value="1"/>
</dbReference>
<dbReference type="InterPro" id="IPR051536">
    <property type="entry name" value="UDG_Type-4/5"/>
</dbReference>
<dbReference type="InterPro" id="IPR044147">
    <property type="entry name" value="UdgB-like"/>
</dbReference>
<dbReference type="InterPro" id="IPR005122">
    <property type="entry name" value="Uracil-DNA_glycosylase-like"/>
</dbReference>
<dbReference type="InterPro" id="IPR036895">
    <property type="entry name" value="Uracil-DNA_glycosylase-like_sf"/>
</dbReference>
<dbReference type="PANTHER" id="PTHR33693">
    <property type="entry name" value="TYPE-5 URACIL-DNA GLYCOSYLASE"/>
    <property type="match status" value="1"/>
</dbReference>
<dbReference type="PANTHER" id="PTHR33693:SF3">
    <property type="entry name" value="TYPE-5 URACIL-DNA GLYCOSYLASE"/>
    <property type="match status" value="1"/>
</dbReference>
<dbReference type="Pfam" id="PF03167">
    <property type="entry name" value="UDG"/>
    <property type="match status" value="1"/>
</dbReference>
<dbReference type="SMART" id="SM00986">
    <property type="entry name" value="UDG"/>
    <property type="match status" value="1"/>
</dbReference>
<dbReference type="SMART" id="SM00987">
    <property type="entry name" value="UreE_C"/>
    <property type="match status" value="1"/>
</dbReference>
<dbReference type="SUPFAM" id="SSF52141">
    <property type="entry name" value="Uracil-DNA glycosylase-like"/>
    <property type="match status" value="1"/>
</dbReference>
<comment type="function">
    <text evidence="1">DNA glycosylase with broad substrate specificity.</text>
</comment>
<comment type="similarity">
    <text evidence="4">Belongs to the uracil-DNA glycosylase (UDG) superfamily. Type 5 (UDGb) family.</text>
</comment>
<comment type="sequence caution" evidence="4">
    <conflict type="erroneous initiation">
        <sequence resource="EMBL-CDS" id="SIT99890"/>
    </conflict>
    <text>Extended N-terminus.</text>
</comment>
<gene>
    <name evidence="1" type="primary">udgB</name>
    <name type="ordered locus">BQ2027_MB1289</name>
</gene>
<keyword id="KW-0004">4Fe-4S</keyword>
<keyword id="KW-0227">DNA damage</keyword>
<keyword id="KW-0234">DNA repair</keyword>
<keyword id="KW-0378">Hydrolase</keyword>
<keyword id="KW-0408">Iron</keyword>
<keyword id="KW-0411">Iron-sulfur</keyword>
<keyword id="KW-0479">Metal-binding</keyword>
<keyword id="KW-1185">Reference proteome</keyword>
<feature type="chain" id="PRO_0000103775" description="Type-5 uracil-DNA glycosylase">
    <location>
        <begin position="1"/>
        <end position="268"/>
    </location>
</feature>
<feature type="region of interest" description="Disordered" evidence="3">
    <location>
        <begin position="1"/>
        <end position="29"/>
    </location>
</feature>
<feature type="binding site" evidence="2">
    <location>
        <position position="57"/>
    </location>
    <ligand>
        <name>[4Fe-4S] cluster</name>
        <dbReference type="ChEBI" id="CHEBI:49883"/>
    </ligand>
</feature>
<feature type="binding site" evidence="2">
    <location>
        <position position="60"/>
    </location>
    <ligand>
        <name>[4Fe-4S] cluster</name>
        <dbReference type="ChEBI" id="CHEBI:49883"/>
    </ligand>
</feature>
<feature type="binding site" evidence="2">
    <location>
        <position position="161"/>
    </location>
    <ligand>
        <name>[4Fe-4S] cluster</name>
        <dbReference type="ChEBI" id="CHEBI:49883"/>
    </ligand>
</feature>
<feature type="binding site" evidence="2">
    <location>
        <position position="176"/>
    </location>
    <ligand>
        <name>[4Fe-4S] cluster</name>
        <dbReference type="ChEBI" id="CHEBI:49883"/>
    </ligand>
</feature>